<comment type="function">
    <text evidence="1">One of the primary rRNA binding proteins. Required for association of the 30S and 50S subunits to form the 70S ribosome, for tRNA binding and peptide bond formation. It has been suggested to have peptidyltransferase activity; this is somewhat controversial. Makes several contacts with the 16S rRNA in the 70S ribosome.</text>
</comment>
<comment type="subunit">
    <text evidence="1">Part of the 50S ribosomal subunit. Forms a bridge to the 30S subunit in the 70S ribosome.</text>
</comment>
<comment type="similarity">
    <text evidence="1">Belongs to the universal ribosomal protein uL2 family.</text>
</comment>
<feature type="chain" id="PRO_1000141560" description="Large ribosomal subunit protein uL2">
    <location>
        <begin position="1"/>
        <end position="275"/>
    </location>
</feature>
<feature type="region of interest" description="Disordered" evidence="2">
    <location>
        <begin position="224"/>
        <end position="251"/>
    </location>
</feature>
<protein>
    <recommendedName>
        <fullName evidence="1">Large ribosomal subunit protein uL2</fullName>
    </recommendedName>
    <alternativeName>
        <fullName evidence="3">50S ribosomal protein L2</fullName>
    </alternativeName>
</protein>
<organism>
    <name type="scientific">Heliobacterium modesticaldum (strain ATCC 51547 / Ice1)</name>
    <dbReference type="NCBI Taxonomy" id="498761"/>
    <lineage>
        <taxon>Bacteria</taxon>
        <taxon>Bacillati</taxon>
        <taxon>Bacillota</taxon>
        <taxon>Clostridia</taxon>
        <taxon>Eubacteriales</taxon>
        <taxon>Heliobacteriaceae</taxon>
        <taxon>Heliomicrobium</taxon>
    </lineage>
</organism>
<accession>B0TC59</accession>
<sequence>MAVKKFKPTSPGIRQMTVASFDEITKTKPEKSLLEPLKKKAGRNNQGKLTVRHQGGGHKRMYRVIDFKRIKDGIPAKVASIEYDPNRTSRIALLHYADGEKRYIIAPNGLNVGDTVVSGPDADIKTGNCLPLKNIPVGTLIHCIEMRPGKGGQLVRSAGAAAQLMAKEGEHATLRLPSGEMRKVLAECRATIGQMGNLEHENITIGKAGRKRWLGIRPTVRGVVMNPVDHPHGGGEGRSPIGRKAPVTPWGKVAIGGKTRRKKASDKLIIKRRTK</sequence>
<reference key="1">
    <citation type="journal article" date="2008" name="J. Bacteriol.">
        <title>The genome of Heliobacterium modesticaldum, a phototrophic representative of the Firmicutes containing the simplest photosynthetic apparatus.</title>
        <authorList>
            <person name="Sattley W.M."/>
            <person name="Madigan M.T."/>
            <person name="Swingley W.D."/>
            <person name="Cheung P.C."/>
            <person name="Clocksin K.M."/>
            <person name="Conrad A.L."/>
            <person name="Dejesa L.C."/>
            <person name="Honchak B.M."/>
            <person name="Jung D.O."/>
            <person name="Karbach L.E."/>
            <person name="Kurdoglu A."/>
            <person name="Lahiri S."/>
            <person name="Mastrian S.D."/>
            <person name="Page L.E."/>
            <person name="Taylor H.L."/>
            <person name="Wang Z.T."/>
            <person name="Raymond J."/>
            <person name="Chen M."/>
            <person name="Blankenship R.E."/>
            <person name="Touchman J.W."/>
        </authorList>
    </citation>
    <scope>NUCLEOTIDE SEQUENCE [LARGE SCALE GENOMIC DNA]</scope>
    <source>
        <strain>ATCC 51547 / Ice1</strain>
    </source>
</reference>
<dbReference type="EMBL" id="CP000930">
    <property type="protein sequence ID" value="ABZ83958.1"/>
    <property type="molecule type" value="Genomic_DNA"/>
</dbReference>
<dbReference type="RefSeq" id="WP_012282474.1">
    <property type="nucleotide sequence ID" value="NC_010337.2"/>
</dbReference>
<dbReference type="SMR" id="B0TC59"/>
<dbReference type="STRING" id="498761.HM1_1381"/>
<dbReference type="KEGG" id="hmo:HM1_1381"/>
<dbReference type="eggNOG" id="COG0090">
    <property type="taxonomic scope" value="Bacteria"/>
</dbReference>
<dbReference type="HOGENOM" id="CLU_036235_2_1_9"/>
<dbReference type="OrthoDB" id="9778722at2"/>
<dbReference type="Proteomes" id="UP000008550">
    <property type="component" value="Chromosome"/>
</dbReference>
<dbReference type="GO" id="GO:0015934">
    <property type="term" value="C:large ribosomal subunit"/>
    <property type="evidence" value="ECO:0007669"/>
    <property type="project" value="InterPro"/>
</dbReference>
<dbReference type="GO" id="GO:0019843">
    <property type="term" value="F:rRNA binding"/>
    <property type="evidence" value="ECO:0007669"/>
    <property type="project" value="UniProtKB-UniRule"/>
</dbReference>
<dbReference type="GO" id="GO:0003735">
    <property type="term" value="F:structural constituent of ribosome"/>
    <property type="evidence" value="ECO:0007669"/>
    <property type="project" value="InterPro"/>
</dbReference>
<dbReference type="GO" id="GO:0016740">
    <property type="term" value="F:transferase activity"/>
    <property type="evidence" value="ECO:0007669"/>
    <property type="project" value="InterPro"/>
</dbReference>
<dbReference type="GO" id="GO:0002181">
    <property type="term" value="P:cytoplasmic translation"/>
    <property type="evidence" value="ECO:0007669"/>
    <property type="project" value="TreeGrafter"/>
</dbReference>
<dbReference type="FunFam" id="2.30.30.30:FF:000001">
    <property type="entry name" value="50S ribosomal protein L2"/>
    <property type="match status" value="1"/>
</dbReference>
<dbReference type="FunFam" id="2.40.50.140:FF:000003">
    <property type="entry name" value="50S ribosomal protein L2"/>
    <property type="match status" value="1"/>
</dbReference>
<dbReference type="FunFam" id="4.10.950.10:FF:000001">
    <property type="entry name" value="50S ribosomal protein L2"/>
    <property type="match status" value="1"/>
</dbReference>
<dbReference type="Gene3D" id="2.30.30.30">
    <property type="match status" value="1"/>
</dbReference>
<dbReference type="Gene3D" id="2.40.50.140">
    <property type="entry name" value="Nucleic acid-binding proteins"/>
    <property type="match status" value="1"/>
</dbReference>
<dbReference type="Gene3D" id="4.10.950.10">
    <property type="entry name" value="Ribosomal protein L2, domain 3"/>
    <property type="match status" value="1"/>
</dbReference>
<dbReference type="HAMAP" id="MF_01320_B">
    <property type="entry name" value="Ribosomal_uL2_B"/>
    <property type="match status" value="1"/>
</dbReference>
<dbReference type="InterPro" id="IPR012340">
    <property type="entry name" value="NA-bd_OB-fold"/>
</dbReference>
<dbReference type="InterPro" id="IPR014722">
    <property type="entry name" value="Rib_uL2_dom2"/>
</dbReference>
<dbReference type="InterPro" id="IPR002171">
    <property type="entry name" value="Ribosomal_uL2"/>
</dbReference>
<dbReference type="InterPro" id="IPR005880">
    <property type="entry name" value="Ribosomal_uL2_bac/org-type"/>
</dbReference>
<dbReference type="InterPro" id="IPR022669">
    <property type="entry name" value="Ribosomal_uL2_C"/>
</dbReference>
<dbReference type="InterPro" id="IPR022671">
    <property type="entry name" value="Ribosomal_uL2_CS"/>
</dbReference>
<dbReference type="InterPro" id="IPR014726">
    <property type="entry name" value="Ribosomal_uL2_dom3"/>
</dbReference>
<dbReference type="InterPro" id="IPR022666">
    <property type="entry name" value="Ribosomal_uL2_RNA-bd_dom"/>
</dbReference>
<dbReference type="InterPro" id="IPR008991">
    <property type="entry name" value="Translation_prot_SH3-like_sf"/>
</dbReference>
<dbReference type="NCBIfam" id="TIGR01171">
    <property type="entry name" value="rplB_bact"/>
    <property type="match status" value="1"/>
</dbReference>
<dbReference type="PANTHER" id="PTHR13691:SF5">
    <property type="entry name" value="LARGE RIBOSOMAL SUBUNIT PROTEIN UL2M"/>
    <property type="match status" value="1"/>
</dbReference>
<dbReference type="PANTHER" id="PTHR13691">
    <property type="entry name" value="RIBOSOMAL PROTEIN L2"/>
    <property type="match status" value="1"/>
</dbReference>
<dbReference type="Pfam" id="PF00181">
    <property type="entry name" value="Ribosomal_L2"/>
    <property type="match status" value="1"/>
</dbReference>
<dbReference type="Pfam" id="PF03947">
    <property type="entry name" value="Ribosomal_L2_C"/>
    <property type="match status" value="1"/>
</dbReference>
<dbReference type="PIRSF" id="PIRSF002158">
    <property type="entry name" value="Ribosomal_L2"/>
    <property type="match status" value="1"/>
</dbReference>
<dbReference type="SMART" id="SM01383">
    <property type="entry name" value="Ribosomal_L2"/>
    <property type="match status" value="1"/>
</dbReference>
<dbReference type="SMART" id="SM01382">
    <property type="entry name" value="Ribosomal_L2_C"/>
    <property type="match status" value="1"/>
</dbReference>
<dbReference type="SUPFAM" id="SSF50249">
    <property type="entry name" value="Nucleic acid-binding proteins"/>
    <property type="match status" value="1"/>
</dbReference>
<dbReference type="SUPFAM" id="SSF50104">
    <property type="entry name" value="Translation proteins SH3-like domain"/>
    <property type="match status" value="1"/>
</dbReference>
<dbReference type="PROSITE" id="PS00467">
    <property type="entry name" value="RIBOSOMAL_L2"/>
    <property type="match status" value="1"/>
</dbReference>
<keyword id="KW-1185">Reference proteome</keyword>
<keyword id="KW-0687">Ribonucleoprotein</keyword>
<keyword id="KW-0689">Ribosomal protein</keyword>
<keyword id="KW-0694">RNA-binding</keyword>
<keyword id="KW-0699">rRNA-binding</keyword>
<name>RL2_HELMI</name>
<evidence type="ECO:0000255" key="1">
    <source>
        <dbReference type="HAMAP-Rule" id="MF_01320"/>
    </source>
</evidence>
<evidence type="ECO:0000256" key="2">
    <source>
        <dbReference type="SAM" id="MobiDB-lite"/>
    </source>
</evidence>
<evidence type="ECO:0000305" key="3"/>
<gene>
    <name evidence="1" type="primary">rplB</name>
    <name type="ordered locus">Helmi_13330</name>
    <name type="ORF">HM1_1381</name>
</gene>
<proteinExistence type="inferred from homology"/>